<comment type="function">
    <text evidence="1">Catalyzes the interconversion of L-alanine and D-alanine. May also act on other amino acids.</text>
</comment>
<comment type="catalytic activity">
    <reaction evidence="1">
        <text>L-alanine = D-alanine</text>
        <dbReference type="Rhea" id="RHEA:20249"/>
        <dbReference type="ChEBI" id="CHEBI:57416"/>
        <dbReference type="ChEBI" id="CHEBI:57972"/>
        <dbReference type="EC" id="5.1.1.1"/>
    </reaction>
</comment>
<comment type="cofactor">
    <cofactor evidence="1">
        <name>pyridoxal 5'-phosphate</name>
        <dbReference type="ChEBI" id="CHEBI:597326"/>
    </cofactor>
</comment>
<comment type="pathway">
    <text evidence="1">Amino-acid biosynthesis; D-alanine biosynthesis; D-alanine from L-alanine: step 1/1.</text>
</comment>
<comment type="similarity">
    <text evidence="1">Belongs to the alanine racemase family.</text>
</comment>
<organism>
    <name type="scientific">Methylobacterium nodulans (strain LMG 21967 / CNCM I-2342 / ORS 2060)</name>
    <dbReference type="NCBI Taxonomy" id="460265"/>
    <lineage>
        <taxon>Bacteria</taxon>
        <taxon>Pseudomonadati</taxon>
        <taxon>Pseudomonadota</taxon>
        <taxon>Alphaproteobacteria</taxon>
        <taxon>Hyphomicrobiales</taxon>
        <taxon>Methylobacteriaceae</taxon>
        <taxon>Methylobacterium</taxon>
    </lineage>
</organism>
<keyword id="KW-0413">Isomerase</keyword>
<keyword id="KW-0663">Pyridoxal phosphate</keyword>
<keyword id="KW-1185">Reference proteome</keyword>
<name>ALR_METNO</name>
<reference key="1">
    <citation type="submission" date="2009-01" db="EMBL/GenBank/DDBJ databases">
        <title>Complete sequence of chromosome of Methylobacterium nodulans ORS 2060.</title>
        <authorList>
            <consortium name="US DOE Joint Genome Institute"/>
            <person name="Lucas S."/>
            <person name="Copeland A."/>
            <person name="Lapidus A."/>
            <person name="Glavina del Rio T."/>
            <person name="Dalin E."/>
            <person name="Tice H."/>
            <person name="Bruce D."/>
            <person name="Goodwin L."/>
            <person name="Pitluck S."/>
            <person name="Sims D."/>
            <person name="Brettin T."/>
            <person name="Detter J.C."/>
            <person name="Han C."/>
            <person name="Larimer F."/>
            <person name="Land M."/>
            <person name="Hauser L."/>
            <person name="Kyrpides N."/>
            <person name="Ivanova N."/>
            <person name="Marx C.J."/>
            <person name="Richardson P."/>
        </authorList>
    </citation>
    <scope>NUCLEOTIDE SEQUENCE [LARGE SCALE GENOMIC DNA]</scope>
    <source>
        <strain>LMG 21967 / CNCM I-2342 / ORS 2060</strain>
    </source>
</reference>
<accession>B8IEC7</accession>
<dbReference type="EC" id="5.1.1.1" evidence="1"/>
<dbReference type="EMBL" id="CP001349">
    <property type="protein sequence ID" value="ACL59499.1"/>
    <property type="molecule type" value="Genomic_DNA"/>
</dbReference>
<dbReference type="RefSeq" id="WP_015931135.1">
    <property type="nucleotide sequence ID" value="NC_011894.1"/>
</dbReference>
<dbReference type="SMR" id="B8IEC7"/>
<dbReference type="STRING" id="460265.Mnod_4632"/>
<dbReference type="KEGG" id="mno:Mnod_4632"/>
<dbReference type="eggNOG" id="COG0787">
    <property type="taxonomic scope" value="Bacteria"/>
</dbReference>
<dbReference type="HOGENOM" id="CLU_028393_1_1_5"/>
<dbReference type="OrthoDB" id="9813814at2"/>
<dbReference type="UniPathway" id="UPA00042">
    <property type="reaction ID" value="UER00497"/>
</dbReference>
<dbReference type="Proteomes" id="UP000008207">
    <property type="component" value="Chromosome"/>
</dbReference>
<dbReference type="GO" id="GO:0005829">
    <property type="term" value="C:cytosol"/>
    <property type="evidence" value="ECO:0007669"/>
    <property type="project" value="TreeGrafter"/>
</dbReference>
<dbReference type="GO" id="GO:0008784">
    <property type="term" value="F:alanine racemase activity"/>
    <property type="evidence" value="ECO:0007669"/>
    <property type="project" value="UniProtKB-UniRule"/>
</dbReference>
<dbReference type="GO" id="GO:0030170">
    <property type="term" value="F:pyridoxal phosphate binding"/>
    <property type="evidence" value="ECO:0007669"/>
    <property type="project" value="UniProtKB-UniRule"/>
</dbReference>
<dbReference type="GO" id="GO:0030632">
    <property type="term" value="P:D-alanine biosynthetic process"/>
    <property type="evidence" value="ECO:0007669"/>
    <property type="project" value="UniProtKB-UniRule"/>
</dbReference>
<dbReference type="CDD" id="cd00430">
    <property type="entry name" value="PLPDE_III_AR"/>
    <property type="match status" value="1"/>
</dbReference>
<dbReference type="Gene3D" id="3.20.20.10">
    <property type="entry name" value="Alanine racemase"/>
    <property type="match status" value="1"/>
</dbReference>
<dbReference type="Gene3D" id="2.40.37.10">
    <property type="entry name" value="Lyase, Ornithine Decarboxylase, Chain A, domain 1"/>
    <property type="match status" value="1"/>
</dbReference>
<dbReference type="HAMAP" id="MF_01201">
    <property type="entry name" value="Ala_racemase"/>
    <property type="match status" value="1"/>
</dbReference>
<dbReference type="InterPro" id="IPR000821">
    <property type="entry name" value="Ala_racemase"/>
</dbReference>
<dbReference type="InterPro" id="IPR009006">
    <property type="entry name" value="Ala_racemase/Decarboxylase_C"/>
</dbReference>
<dbReference type="InterPro" id="IPR011079">
    <property type="entry name" value="Ala_racemase_C"/>
</dbReference>
<dbReference type="InterPro" id="IPR001608">
    <property type="entry name" value="Ala_racemase_N"/>
</dbReference>
<dbReference type="InterPro" id="IPR020622">
    <property type="entry name" value="Ala_racemase_pyridoxalP-BS"/>
</dbReference>
<dbReference type="InterPro" id="IPR029066">
    <property type="entry name" value="PLP-binding_barrel"/>
</dbReference>
<dbReference type="NCBIfam" id="TIGR00492">
    <property type="entry name" value="alr"/>
    <property type="match status" value="1"/>
</dbReference>
<dbReference type="PANTHER" id="PTHR30511">
    <property type="entry name" value="ALANINE RACEMASE"/>
    <property type="match status" value="1"/>
</dbReference>
<dbReference type="PANTHER" id="PTHR30511:SF0">
    <property type="entry name" value="ALANINE RACEMASE, CATABOLIC-RELATED"/>
    <property type="match status" value="1"/>
</dbReference>
<dbReference type="Pfam" id="PF00842">
    <property type="entry name" value="Ala_racemase_C"/>
    <property type="match status" value="1"/>
</dbReference>
<dbReference type="Pfam" id="PF01168">
    <property type="entry name" value="Ala_racemase_N"/>
    <property type="match status" value="1"/>
</dbReference>
<dbReference type="PRINTS" id="PR00992">
    <property type="entry name" value="ALARACEMASE"/>
</dbReference>
<dbReference type="SMART" id="SM01005">
    <property type="entry name" value="Ala_racemase_C"/>
    <property type="match status" value="1"/>
</dbReference>
<dbReference type="SUPFAM" id="SSF50621">
    <property type="entry name" value="Alanine racemase C-terminal domain-like"/>
    <property type="match status" value="1"/>
</dbReference>
<dbReference type="SUPFAM" id="SSF51419">
    <property type="entry name" value="PLP-binding barrel"/>
    <property type="match status" value="1"/>
</dbReference>
<dbReference type="PROSITE" id="PS00395">
    <property type="entry name" value="ALANINE_RACEMASE"/>
    <property type="match status" value="1"/>
</dbReference>
<proteinExistence type="inferred from homology"/>
<gene>
    <name type="primary">alr</name>
    <name type="ordered locus">Mnod_4632</name>
</gene>
<evidence type="ECO:0000255" key="1">
    <source>
        <dbReference type="HAMAP-Rule" id="MF_01201"/>
    </source>
</evidence>
<feature type="chain" id="PRO_1000164605" description="Alanine racemase">
    <location>
        <begin position="1"/>
        <end position="370"/>
    </location>
</feature>
<feature type="active site" description="Proton acceptor; specific for D-alanine" evidence="1">
    <location>
        <position position="39"/>
    </location>
</feature>
<feature type="active site" description="Proton acceptor; specific for L-alanine" evidence="1">
    <location>
        <position position="258"/>
    </location>
</feature>
<feature type="binding site" evidence="1">
    <location>
        <position position="137"/>
    </location>
    <ligand>
        <name>substrate</name>
    </ligand>
</feature>
<feature type="binding site" evidence="1">
    <location>
        <position position="306"/>
    </location>
    <ligand>
        <name>substrate</name>
    </ligand>
</feature>
<feature type="modified residue" description="N6-(pyridoxal phosphate)lysine" evidence="1">
    <location>
        <position position="39"/>
    </location>
</feature>
<protein>
    <recommendedName>
        <fullName evidence="1">Alanine racemase</fullName>
        <ecNumber evidence="1">5.1.1.1</ecNumber>
    </recommendedName>
</protein>
<sequence>MTATSSHGARLTIDLGALAANWRRLAAEAAGAECAAVIKADAYGCGIAQVAPALWDAGCRTFFVAHLSEAERTRAVLSDATIYVLNGFPPGSAPAYRAMGFRPVLGSRSEIAEWAQACRSLGERLPAALHVDTGMNRLGLNPAEAIDLAGDAVLGAFQPTLLMSHLVSAEVPGDAITARQIAEFARVRMAYPALPASLANSAGIFLGKAARHEIVRPGYALYGGNPTPERENPMRPVVRLEAAILQLREVAAGETAGYNARWTAPGPRLLATLSLGYADGYPRAGSGRAEALVGGVRCPFVGTISMDLVILDVTQAPPEAVRRGAPVVLIGDGLTLDEVGQRAGTIGYEILTNLGSRYDRHYIEGSSLSA</sequence>